<feature type="chain" id="PRO_1000116517" description="Phospho-N-acetylmuramoyl-pentapeptide-transferase">
    <location>
        <begin position="1"/>
        <end position="360"/>
    </location>
</feature>
<feature type="topological domain" description="Periplasmic" evidence="1">
    <location>
        <begin position="1"/>
        <end position="25"/>
    </location>
</feature>
<feature type="transmembrane region" description="Helical" evidence="1">
    <location>
        <begin position="26"/>
        <end position="46"/>
    </location>
</feature>
<feature type="topological domain" description="Cytoplasmic" evidence="1">
    <location>
        <begin position="47"/>
        <end position="71"/>
    </location>
</feature>
<feature type="transmembrane region" description="Helical" evidence="1">
    <location>
        <begin position="72"/>
        <end position="92"/>
    </location>
</feature>
<feature type="topological domain" description="Periplasmic" evidence="1">
    <location>
        <position position="93"/>
    </location>
</feature>
<feature type="transmembrane region" description="Helical" evidence="1">
    <location>
        <begin position="94"/>
        <end position="114"/>
    </location>
</feature>
<feature type="topological domain" description="Cytoplasmic" evidence="1">
    <location>
        <begin position="115"/>
        <end position="131"/>
    </location>
</feature>
<feature type="transmembrane region" description="Helical" evidence="1">
    <location>
        <begin position="132"/>
        <end position="152"/>
    </location>
</feature>
<feature type="topological domain" description="Periplasmic" evidence="1">
    <location>
        <begin position="153"/>
        <end position="167"/>
    </location>
</feature>
<feature type="transmembrane region" description="Helical" evidence="1">
    <location>
        <begin position="168"/>
        <end position="188"/>
    </location>
</feature>
<feature type="topological domain" description="Cytoplasmic" evidence="1">
    <location>
        <begin position="189"/>
        <end position="198"/>
    </location>
</feature>
<feature type="transmembrane region" description="Helical" evidence="1">
    <location>
        <begin position="199"/>
        <end position="219"/>
    </location>
</feature>
<feature type="topological domain" description="Periplasmic" evidence="1">
    <location>
        <begin position="220"/>
        <end position="235"/>
    </location>
</feature>
<feature type="transmembrane region" description="Helical" evidence="1">
    <location>
        <begin position="236"/>
        <end position="256"/>
    </location>
</feature>
<feature type="topological domain" description="Cytoplasmic" evidence="1">
    <location>
        <begin position="257"/>
        <end position="262"/>
    </location>
</feature>
<feature type="transmembrane region" description="Helical" evidence="1">
    <location>
        <begin position="263"/>
        <end position="283"/>
    </location>
</feature>
<feature type="topological domain" description="Periplasmic" evidence="1">
    <location>
        <begin position="284"/>
        <end position="287"/>
    </location>
</feature>
<feature type="transmembrane region" description="Helical" evidence="1">
    <location>
        <begin position="288"/>
        <end position="308"/>
    </location>
</feature>
<feature type="topological domain" description="Cytoplasmic" evidence="1">
    <location>
        <begin position="309"/>
        <end position="337"/>
    </location>
</feature>
<feature type="transmembrane region" description="Helical" evidence="1">
    <location>
        <begin position="338"/>
        <end position="358"/>
    </location>
</feature>
<feature type="topological domain" description="Periplasmic" evidence="1">
    <location>
        <begin position="359"/>
        <end position="360"/>
    </location>
</feature>
<gene>
    <name evidence="1" type="primary">mraY</name>
    <name type="ordered locus">EFER_0109</name>
</gene>
<keyword id="KW-0131">Cell cycle</keyword>
<keyword id="KW-0132">Cell division</keyword>
<keyword id="KW-0997">Cell inner membrane</keyword>
<keyword id="KW-1003">Cell membrane</keyword>
<keyword id="KW-0133">Cell shape</keyword>
<keyword id="KW-0961">Cell wall biogenesis/degradation</keyword>
<keyword id="KW-0460">Magnesium</keyword>
<keyword id="KW-0472">Membrane</keyword>
<keyword id="KW-0479">Metal-binding</keyword>
<keyword id="KW-0573">Peptidoglycan synthesis</keyword>
<keyword id="KW-0808">Transferase</keyword>
<keyword id="KW-0812">Transmembrane</keyword>
<keyword id="KW-1133">Transmembrane helix</keyword>
<accession>B7LWF0</accession>
<organism>
    <name type="scientific">Escherichia fergusonii (strain ATCC 35469 / DSM 13698 / CCUG 18766 / IAM 14443 / JCM 21226 / LMG 7866 / NBRC 102419 / NCTC 12128 / CDC 0568-73)</name>
    <dbReference type="NCBI Taxonomy" id="585054"/>
    <lineage>
        <taxon>Bacteria</taxon>
        <taxon>Pseudomonadati</taxon>
        <taxon>Pseudomonadota</taxon>
        <taxon>Gammaproteobacteria</taxon>
        <taxon>Enterobacterales</taxon>
        <taxon>Enterobacteriaceae</taxon>
        <taxon>Escherichia</taxon>
    </lineage>
</organism>
<name>MRAY_ESCF3</name>
<reference key="1">
    <citation type="journal article" date="2009" name="PLoS Genet.">
        <title>Organised genome dynamics in the Escherichia coli species results in highly diverse adaptive paths.</title>
        <authorList>
            <person name="Touchon M."/>
            <person name="Hoede C."/>
            <person name="Tenaillon O."/>
            <person name="Barbe V."/>
            <person name="Baeriswyl S."/>
            <person name="Bidet P."/>
            <person name="Bingen E."/>
            <person name="Bonacorsi S."/>
            <person name="Bouchier C."/>
            <person name="Bouvet O."/>
            <person name="Calteau A."/>
            <person name="Chiapello H."/>
            <person name="Clermont O."/>
            <person name="Cruveiller S."/>
            <person name="Danchin A."/>
            <person name="Diard M."/>
            <person name="Dossat C."/>
            <person name="Karoui M.E."/>
            <person name="Frapy E."/>
            <person name="Garry L."/>
            <person name="Ghigo J.M."/>
            <person name="Gilles A.M."/>
            <person name="Johnson J."/>
            <person name="Le Bouguenec C."/>
            <person name="Lescat M."/>
            <person name="Mangenot S."/>
            <person name="Martinez-Jehanne V."/>
            <person name="Matic I."/>
            <person name="Nassif X."/>
            <person name="Oztas S."/>
            <person name="Petit M.A."/>
            <person name="Pichon C."/>
            <person name="Rouy Z."/>
            <person name="Ruf C.S."/>
            <person name="Schneider D."/>
            <person name="Tourret J."/>
            <person name="Vacherie B."/>
            <person name="Vallenet D."/>
            <person name="Medigue C."/>
            <person name="Rocha E.P.C."/>
            <person name="Denamur E."/>
        </authorList>
    </citation>
    <scope>NUCLEOTIDE SEQUENCE [LARGE SCALE GENOMIC DNA]</scope>
    <source>
        <strain>ATCC 35469 / DSM 13698 / BCRC 15582 / CCUG 18766 / IAM 14443 / JCM 21226 / LMG 7866 / NBRC 102419 / NCTC 12128 / CDC 0568-73</strain>
    </source>
</reference>
<dbReference type="EC" id="2.7.8.13" evidence="1"/>
<dbReference type="EMBL" id="CU928158">
    <property type="protein sequence ID" value="CAQ87692.1"/>
    <property type="molecule type" value="Genomic_DNA"/>
</dbReference>
<dbReference type="RefSeq" id="WP_000964131.1">
    <property type="nucleotide sequence ID" value="NC_011740.1"/>
</dbReference>
<dbReference type="SMR" id="B7LWF0"/>
<dbReference type="GeneID" id="93777347"/>
<dbReference type="KEGG" id="efe:EFER_0109"/>
<dbReference type="HOGENOM" id="CLU_023982_0_0_6"/>
<dbReference type="OrthoDB" id="9805475at2"/>
<dbReference type="UniPathway" id="UPA00219"/>
<dbReference type="Proteomes" id="UP000000745">
    <property type="component" value="Chromosome"/>
</dbReference>
<dbReference type="GO" id="GO:0005886">
    <property type="term" value="C:plasma membrane"/>
    <property type="evidence" value="ECO:0007669"/>
    <property type="project" value="UniProtKB-SubCell"/>
</dbReference>
<dbReference type="GO" id="GO:0046872">
    <property type="term" value="F:metal ion binding"/>
    <property type="evidence" value="ECO:0007669"/>
    <property type="project" value="UniProtKB-KW"/>
</dbReference>
<dbReference type="GO" id="GO:0008963">
    <property type="term" value="F:phospho-N-acetylmuramoyl-pentapeptide-transferase activity"/>
    <property type="evidence" value="ECO:0007669"/>
    <property type="project" value="UniProtKB-UniRule"/>
</dbReference>
<dbReference type="GO" id="GO:0051992">
    <property type="term" value="F:UDP-N-acetylmuramoyl-L-alanyl-D-glutamyl-meso-2,6-diaminopimelyl-D-alanyl-D-alanine:undecaprenyl-phosphate transferase activity"/>
    <property type="evidence" value="ECO:0007669"/>
    <property type="project" value="RHEA"/>
</dbReference>
<dbReference type="GO" id="GO:0051301">
    <property type="term" value="P:cell division"/>
    <property type="evidence" value="ECO:0007669"/>
    <property type="project" value="UniProtKB-KW"/>
</dbReference>
<dbReference type="GO" id="GO:0071555">
    <property type="term" value="P:cell wall organization"/>
    <property type="evidence" value="ECO:0007669"/>
    <property type="project" value="UniProtKB-KW"/>
</dbReference>
<dbReference type="GO" id="GO:0009252">
    <property type="term" value="P:peptidoglycan biosynthetic process"/>
    <property type="evidence" value="ECO:0007669"/>
    <property type="project" value="UniProtKB-UniRule"/>
</dbReference>
<dbReference type="GO" id="GO:0008360">
    <property type="term" value="P:regulation of cell shape"/>
    <property type="evidence" value="ECO:0007669"/>
    <property type="project" value="UniProtKB-KW"/>
</dbReference>
<dbReference type="CDD" id="cd06852">
    <property type="entry name" value="GT_MraY"/>
    <property type="match status" value="1"/>
</dbReference>
<dbReference type="HAMAP" id="MF_00038">
    <property type="entry name" value="MraY"/>
    <property type="match status" value="1"/>
</dbReference>
<dbReference type="InterPro" id="IPR000715">
    <property type="entry name" value="Glycosyl_transferase_4"/>
</dbReference>
<dbReference type="InterPro" id="IPR003524">
    <property type="entry name" value="PNAcMuramoyl-5peptid_Trfase"/>
</dbReference>
<dbReference type="InterPro" id="IPR018480">
    <property type="entry name" value="PNAcMuramoyl-5peptid_Trfase_CS"/>
</dbReference>
<dbReference type="NCBIfam" id="TIGR00445">
    <property type="entry name" value="mraY"/>
    <property type="match status" value="1"/>
</dbReference>
<dbReference type="PANTHER" id="PTHR22926">
    <property type="entry name" value="PHOSPHO-N-ACETYLMURAMOYL-PENTAPEPTIDE-TRANSFERASE"/>
    <property type="match status" value="1"/>
</dbReference>
<dbReference type="PANTHER" id="PTHR22926:SF5">
    <property type="entry name" value="PHOSPHO-N-ACETYLMURAMOYL-PENTAPEPTIDE-TRANSFERASE HOMOLOG"/>
    <property type="match status" value="1"/>
</dbReference>
<dbReference type="Pfam" id="PF00953">
    <property type="entry name" value="Glycos_transf_4"/>
    <property type="match status" value="1"/>
</dbReference>
<dbReference type="Pfam" id="PF10555">
    <property type="entry name" value="MraY_sig1"/>
    <property type="match status" value="1"/>
</dbReference>
<dbReference type="PROSITE" id="PS01347">
    <property type="entry name" value="MRAY_1"/>
    <property type="match status" value="1"/>
</dbReference>
<dbReference type="PROSITE" id="PS01348">
    <property type="entry name" value="MRAY_2"/>
    <property type="match status" value="1"/>
</dbReference>
<proteinExistence type="inferred from homology"/>
<comment type="function">
    <text evidence="1">Catalyzes the initial step of the lipid cycle reactions in the biosynthesis of the cell wall peptidoglycan: transfers peptidoglycan precursor phospho-MurNAc-pentapeptide from UDP-MurNAc-pentapeptide onto the lipid carrier undecaprenyl phosphate, yielding undecaprenyl-pyrophosphoryl-MurNAc-pentapeptide, known as lipid I.</text>
</comment>
<comment type="catalytic activity">
    <reaction evidence="1">
        <text>UDP-N-acetyl-alpha-D-muramoyl-L-alanyl-gamma-D-glutamyl-meso-2,6-diaminopimeloyl-D-alanyl-D-alanine + di-trans,octa-cis-undecaprenyl phosphate = di-trans,octa-cis-undecaprenyl diphospho-N-acetyl-alpha-D-muramoyl-L-alanyl-D-glutamyl-meso-2,6-diaminopimeloyl-D-alanyl-D-alanine + UMP</text>
        <dbReference type="Rhea" id="RHEA:28386"/>
        <dbReference type="ChEBI" id="CHEBI:57865"/>
        <dbReference type="ChEBI" id="CHEBI:60392"/>
        <dbReference type="ChEBI" id="CHEBI:61386"/>
        <dbReference type="ChEBI" id="CHEBI:61387"/>
        <dbReference type="EC" id="2.7.8.13"/>
    </reaction>
</comment>
<comment type="cofactor">
    <cofactor evidence="1">
        <name>Mg(2+)</name>
        <dbReference type="ChEBI" id="CHEBI:18420"/>
    </cofactor>
</comment>
<comment type="pathway">
    <text evidence="1">Cell wall biogenesis; peptidoglycan biosynthesis.</text>
</comment>
<comment type="subcellular location">
    <subcellularLocation>
        <location evidence="1">Cell inner membrane</location>
        <topology evidence="1">Multi-pass membrane protein</topology>
    </subcellularLocation>
</comment>
<comment type="similarity">
    <text evidence="1">Belongs to the glycosyltransferase 4 family. MraY subfamily.</text>
</comment>
<protein>
    <recommendedName>
        <fullName evidence="1">Phospho-N-acetylmuramoyl-pentapeptide-transferase</fullName>
        <ecNumber evidence="1">2.7.8.13</ecNumber>
    </recommendedName>
    <alternativeName>
        <fullName evidence="1">UDP-MurNAc-pentapeptide phosphotransferase</fullName>
    </alternativeName>
</protein>
<sequence>MLVWLAEHLVKYYSGFNVFSYLTFRAIVSLLTALFISLWMGPRMIAHLQKLSFGQVVRNDGPESHFSKRGTPTMGGIMILTAIVISVLLWAYPSNPYVWCVLVVLVGYGVIGFVDDYRKVVRKDTKGLIARWKYFWMSVIALGVAFALYLAGKDTPATQLVVPFFKDVMPQLGLFYILLAYFVIVGTGNAVNLTDGLDGLAIMPTVFVAGGFALVAWATGNMNFASYLHIPYLRHAGELVIVCTAIVGAGLGFLWFNTYPAQVFMGDVGSLALGGALGIIAVLLRQEFLLVIMGGVFVVETLSVILQVGSFKLRGQRIFRMAPIHHHYELKGWPEPRVIVRFWIISLMLVLIGLATLKVR</sequence>
<evidence type="ECO:0000255" key="1">
    <source>
        <dbReference type="HAMAP-Rule" id="MF_00038"/>
    </source>
</evidence>